<reference key="1">
    <citation type="journal article" date="2004" name="Cell">
        <title>Discoveries of nicotinamide riboside as a nutrient and conserved NRK genes establish a Preiss-Handler independent route to NAD+ in fungi and humans.</title>
        <authorList>
            <person name="Bieganowski P."/>
            <person name="Brenner C."/>
        </authorList>
    </citation>
    <scope>NUCLEOTIDE SEQUENCE [GENOMIC DNA]</scope>
    <scope>FUNCTION</scope>
</reference>
<reference key="2">
    <citation type="journal article" date="1995" name="Yeast">
        <title>A 43.5 kb segment of yeast chromosome XIV, which contains MFA2, MEP2, CAP/SRV2, NAM9, FKB1/FPR1/RBP1, MOM22 and CPT1, predicts an adenosine deaminase gene and 14 new open reading frames.</title>
        <authorList>
            <person name="Mallet L."/>
            <person name="Bussereau F."/>
            <person name="Jacquet M."/>
        </authorList>
    </citation>
    <scope>NUCLEOTIDE SEQUENCE [GENOMIC DNA]</scope>
    <source>
        <strain>ATCC 204508 / S288c</strain>
    </source>
</reference>
<reference key="3">
    <citation type="journal article" date="1997" name="Nature">
        <title>The nucleotide sequence of Saccharomyces cerevisiae chromosome XIV and its evolutionary implications.</title>
        <authorList>
            <person name="Philippsen P."/>
            <person name="Kleine K."/>
            <person name="Poehlmann R."/>
            <person name="Duesterhoeft A."/>
            <person name="Hamberg K."/>
            <person name="Hegemann J.H."/>
            <person name="Obermaier B."/>
            <person name="Urrestarazu L.A."/>
            <person name="Aert R."/>
            <person name="Albermann K."/>
            <person name="Altmann R."/>
            <person name="Andre B."/>
            <person name="Baladron V."/>
            <person name="Ballesta J.P.G."/>
            <person name="Becam A.-M."/>
            <person name="Beinhauer J.D."/>
            <person name="Boskovic J."/>
            <person name="Buitrago M.J."/>
            <person name="Bussereau F."/>
            <person name="Coster F."/>
            <person name="Crouzet M."/>
            <person name="D'Angelo M."/>
            <person name="Dal Pero F."/>
            <person name="De Antoni A."/>
            <person name="del Rey F."/>
            <person name="Doignon F."/>
            <person name="Domdey H."/>
            <person name="Dubois E."/>
            <person name="Fiedler T.A."/>
            <person name="Fleig U."/>
            <person name="Floeth M."/>
            <person name="Fritz C."/>
            <person name="Gaillardin C."/>
            <person name="Garcia-Cantalejo J.M."/>
            <person name="Glansdorff N."/>
            <person name="Goffeau A."/>
            <person name="Gueldener U."/>
            <person name="Herbert C.J."/>
            <person name="Heumann K."/>
            <person name="Heuss-Neitzel D."/>
            <person name="Hilbert H."/>
            <person name="Hinni K."/>
            <person name="Iraqui Houssaini I."/>
            <person name="Jacquet M."/>
            <person name="Jimenez A."/>
            <person name="Jonniaux J.-L."/>
            <person name="Karpfinger-Hartl L."/>
            <person name="Lanfranchi G."/>
            <person name="Lepingle A."/>
            <person name="Levesque H."/>
            <person name="Lyck R."/>
            <person name="Maftahi M."/>
            <person name="Mallet L."/>
            <person name="Maurer C.T.C."/>
            <person name="Messenguy F."/>
            <person name="Mewes H.-W."/>
            <person name="Moestl D."/>
            <person name="Nasr F."/>
            <person name="Nicaud J.-M."/>
            <person name="Niedenthal R.K."/>
            <person name="Pandolfo D."/>
            <person name="Pierard A."/>
            <person name="Piravandi E."/>
            <person name="Planta R.J."/>
            <person name="Pohl T.M."/>
            <person name="Purnelle B."/>
            <person name="Rebischung C."/>
            <person name="Remacha M.A."/>
            <person name="Revuelta J.L."/>
            <person name="Rinke M."/>
            <person name="Saiz J.E."/>
            <person name="Sartorello F."/>
            <person name="Scherens B."/>
            <person name="Sen-Gupta M."/>
            <person name="Soler-Mira A."/>
            <person name="Urbanus J.H.M."/>
            <person name="Valle G."/>
            <person name="Van Dyck L."/>
            <person name="Verhasselt P."/>
            <person name="Vierendeels F."/>
            <person name="Vissers S."/>
            <person name="Voet M."/>
            <person name="Volckaert G."/>
            <person name="Wach A."/>
            <person name="Wambutt R."/>
            <person name="Wedler H."/>
            <person name="Zollner A."/>
            <person name="Hani J."/>
        </authorList>
    </citation>
    <scope>NUCLEOTIDE SEQUENCE [LARGE SCALE GENOMIC DNA]</scope>
    <source>
        <strain>ATCC 204508 / S288c</strain>
    </source>
</reference>
<reference key="4">
    <citation type="journal article" date="2014" name="G3 (Bethesda)">
        <title>The reference genome sequence of Saccharomyces cerevisiae: Then and now.</title>
        <authorList>
            <person name="Engel S.R."/>
            <person name="Dietrich F.S."/>
            <person name="Fisk D.G."/>
            <person name="Binkley G."/>
            <person name="Balakrishnan R."/>
            <person name="Costanzo M.C."/>
            <person name="Dwight S.S."/>
            <person name="Hitz B.C."/>
            <person name="Karra K."/>
            <person name="Nash R.S."/>
            <person name="Weng S."/>
            <person name="Wong E.D."/>
            <person name="Lloyd P."/>
            <person name="Skrzypek M.S."/>
            <person name="Miyasato S.R."/>
            <person name="Simison M."/>
            <person name="Cherry J.M."/>
        </authorList>
    </citation>
    <scope>GENOME REANNOTATION</scope>
    <source>
        <strain>ATCC 204508 / S288c</strain>
    </source>
</reference>
<reference key="5">
    <citation type="journal article" date="2007" name="Genome Res.">
        <title>Approaching a complete repository of sequence-verified protein-encoding clones for Saccharomyces cerevisiae.</title>
        <authorList>
            <person name="Hu Y."/>
            <person name="Rolfs A."/>
            <person name="Bhullar B."/>
            <person name="Murthy T.V.S."/>
            <person name="Zhu C."/>
            <person name="Berger M.F."/>
            <person name="Camargo A.A."/>
            <person name="Kelley F."/>
            <person name="McCarron S."/>
            <person name="Jepson D."/>
            <person name="Richardson A."/>
            <person name="Raphael J."/>
            <person name="Moreira D."/>
            <person name="Taycher E."/>
            <person name="Zuo D."/>
            <person name="Mohr S."/>
            <person name="Kane M.F."/>
            <person name="Williamson J."/>
            <person name="Simpson A.J.G."/>
            <person name="Bulyk M.L."/>
            <person name="Harlow E."/>
            <person name="Marsischky G."/>
            <person name="Kolodner R.D."/>
            <person name="LaBaer J."/>
        </authorList>
    </citation>
    <scope>NUCLEOTIDE SEQUENCE [GENOMIC DNA]</scope>
    <source>
        <strain>ATCC 204508 / S288c</strain>
    </source>
</reference>
<reference key="6">
    <citation type="journal article" date="2003" name="Nature">
        <title>Global analysis of protein expression in yeast.</title>
        <authorList>
            <person name="Ghaemmaghami S."/>
            <person name="Huh W.-K."/>
            <person name="Bower K."/>
            <person name="Howson R.W."/>
            <person name="Belle A."/>
            <person name="Dephoure N."/>
            <person name="O'Shea E.K."/>
            <person name="Weissman J.S."/>
        </authorList>
    </citation>
    <scope>LEVEL OF PROTEIN EXPRESSION [LARGE SCALE ANALYSIS]</scope>
</reference>
<evidence type="ECO:0000250" key="1"/>
<evidence type="ECO:0000250" key="2">
    <source>
        <dbReference type="UniProtKB" id="Q9NWW6"/>
    </source>
</evidence>
<evidence type="ECO:0000269" key="3">
    <source>
    </source>
</evidence>
<evidence type="ECO:0000269" key="4">
    <source>
    </source>
</evidence>
<evidence type="ECO:0000305" key="5"/>
<accession>P53915</accession>
<accession>D6W154</accession>
<proteinExistence type="evidence at protein level"/>
<keyword id="KW-0067">ATP-binding</keyword>
<keyword id="KW-0418">Kinase</keyword>
<keyword id="KW-0460">Magnesium</keyword>
<keyword id="KW-0479">Metal-binding</keyword>
<keyword id="KW-0547">Nucleotide-binding</keyword>
<keyword id="KW-0662">Pyridine nucleotide biosynthesis</keyword>
<keyword id="KW-1185">Reference proteome</keyword>
<keyword id="KW-0808">Transferase</keyword>
<sequence>MTSKKVILVALSGCSSSGKTTIAKLTASLFTKATLIHEDDFYKHDNEVPVDAKYNIQNWDSPEALDFKLFGKELDVIKQTGKIATKLIHNNNVDDPFTKFHIDRQVWDELKAKYDSINDDKYEVVIVDGFMIFNNTGISKKFDLKILVRAPYEVLKKRRASRKGYQTLDSFWVDPPYYFDEFVYESYRANHAQLFVNGDVEGLLDPRKSKNIKEFINDDDTPIAKPLSWVCQEILKLCKD</sequence>
<dbReference type="EC" id="2.7.1.22" evidence="2"/>
<dbReference type="EC" id="2.7.1.173" evidence="2"/>
<dbReference type="EMBL" id="AY611479">
    <property type="protein sequence ID" value="AAT11927.1"/>
    <property type="molecule type" value="Genomic_DNA"/>
</dbReference>
<dbReference type="EMBL" id="Z46843">
    <property type="protein sequence ID" value="CAA86896.1"/>
    <property type="molecule type" value="Genomic_DNA"/>
</dbReference>
<dbReference type="EMBL" id="Z71405">
    <property type="protein sequence ID" value="CAA96011.1"/>
    <property type="molecule type" value="Genomic_DNA"/>
</dbReference>
<dbReference type="EMBL" id="AY558011">
    <property type="protein sequence ID" value="AAS56337.1"/>
    <property type="molecule type" value="Genomic_DNA"/>
</dbReference>
<dbReference type="EMBL" id="BK006947">
    <property type="protein sequence ID" value="DAA10420.1"/>
    <property type="molecule type" value="Genomic_DNA"/>
</dbReference>
<dbReference type="PIR" id="S55154">
    <property type="entry name" value="S55154"/>
</dbReference>
<dbReference type="RefSeq" id="NP_014270.1">
    <property type="nucleotide sequence ID" value="NM_001182967.1"/>
</dbReference>
<dbReference type="SMR" id="P53915"/>
<dbReference type="BioGRID" id="35698">
    <property type="interactions" value="97"/>
</dbReference>
<dbReference type="DIP" id="DIP-8168N"/>
<dbReference type="FunCoup" id="P53915">
    <property type="interactions" value="62"/>
</dbReference>
<dbReference type="IntAct" id="P53915">
    <property type="interactions" value="7"/>
</dbReference>
<dbReference type="STRING" id="4932.YNL129W"/>
<dbReference type="PaxDb" id="4932-YNL129W"/>
<dbReference type="PeptideAtlas" id="P53915"/>
<dbReference type="EnsemblFungi" id="YNL129W_mRNA">
    <property type="protein sequence ID" value="YNL129W"/>
    <property type="gene ID" value="YNL129W"/>
</dbReference>
<dbReference type="GeneID" id="855594"/>
<dbReference type="KEGG" id="sce:YNL129W"/>
<dbReference type="AGR" id="SGD:S000005073"/>
<dbReference type="SGD" id="S000005073">
    <property type="gene designation" value="NRK1"/>
</dbReference>
<dbReference type="VEuPathDB" id="FungiDB:YNL129W"/>
<dbReference type="eggNOG" id="KOG3308">
    <property type="taxonomic scope" value="Eukaryota"/>
</dbReference>
<dbReference type="GeneTree" id="ENSGT00940000175439"/>
<dbReference type="HOGENOM" id="CLU_058668_1_1_1"/>
<dbReference type="InParanoid" id="P53915"/>
<dbReference type="OMA" id="MDMEAMT"/>
<dbReference type="OrthoDB" id="10041966at2759"/>
<dbReference type="BioCyc" id="MetaCyc:MONOMER3O-4139"/>
<dbReference type="BioCyc" id="YEAST:MONOMER3O-4139"/>
<dbReference type="BRENDA" id="2.7.1.22">
    <property type="organism ID" value="984"/>
</dbReference>
<dbReference type="UniPathway" id="UPA00253"/>
<dbReference type="BioGRID-ORCS" id="855594">
    <property type="hits" value="0 hits in 10 CRISPR screens"/>
</dbReference>
<dbReference type="PRO" id="PR:P53915"/>
<dbReference type="Proteomes" id="UP000002311">
    <property type="component" value="Chromosome XIV"/>
</dbReference>
<dbReference type="RNAct" id="P53915">
    <property type="molecule type" value="protein"/>
</dbReference>
<dbReference type="GO" id="GO:0005737">
    <property type="term" value="C:cytoplasm"/>
    <property type="evidence" value="ECO:0007005"/>
    <property type="project" value="SGD"/>
</dbReference>
<dbReference type="GO" id="GO:0000324">
    <property type="term" value="C:fungal-type vacuole"/>
    <property type="evidence" value="ECO:0007005"/>
    <property type="project" value="SGD"/>
</dbReference>
<dbReference type="GO" id="GO:0005524">
    <property type="term" value="F:ATP binding"/>
    <property type="evidence" value="ECO:0007669"/>
    <property type="project" value="UniProtKB-KW"/>
</dbReference>
<dbReference type="GO" id="GO:0046872">
    <property type="term" value="F:metal ion binding"/>
    <property type="evidence" value="ECO:0007669"/>
    <property type="project" value="UniProtKB-KW"/>
</dbReference>
<dbReference type="GO" id="GO:0034317">
    <property type="term" value="F:nicotinate riboside kinase activity"/>
    <property type="evidence" value="ECO:0007669"/>
    <property type="project" value="UniProtKB-EC"/>
</dbReference>
<dbReference type="GO" id="GO:0050262">
    <property type="term" value="F:ribosylnicotinamide kinase activity"/>
    <property type="evidence" value="ECO:0000314"/>
    <property type="project" value="SGD"/>
</dbReference>
<dbReference type="GO" id="GO:0061769">
    <property type="term" value="F:ribosylnicotinate kinase activity"/>
    <property type="evidence" value="ECO:0000318"/>
    <property type="project" value="GO_Central"/>
</dbReference>
<dbReference type="GO" id="GO:0009435">
    <property type="term" value="P:NAD biosynthetic process"/>
    <property type="evidence" value="ECO:0000316"/>
    <property type="project" value="SGD"/>
</dbReference>
<dbReference type="GO" id="GO:0046495">
    <property type="term" value="P:nicotinamide riboside metabolic process"/>
    <property type="evidence" value="ECO:0000314"/>
    <property type="project" value="SGD"/>
</dbReference>
<dbReference type="CDD" id="cd02024">
    <property type="entry name" value="NRK1"/>
    <property type="match status" value="1"/>
</dbReference>
<dbReference type="FunFam" id="3.40.50.300:FF:002490">
    <property type="entry name" value="Nicotinamide riboside kinase"/>
    <property type="match status" value="1"/>
</dbReference>
<dbReference type="Gene3D" id="3.40.50.300">
    <property type="entry name" value="P-loop containing nucleotide triphosphate hydrolases"/>
    <property type="match status" value="1"/>
</dbReference>
<dbReference type="InterPro" id="IPR027417">
    <property type="entry name" value="P-loop_NTPase"/>
</dbReference>
<dbReference type="InterPro" id="IPR006083">
    <property type="entry name" value="PRK/URK"/>
</dbReference>
<dbReference type="PANTHER" id="PTHR10285">
    <property type="entry name" value="URIDINE KINASE"/>
    <property type="match status" value="1"/>
</dbReference>
<dbReference type="Pfam" id="PF00485">
    <property type="entry name" value="PRK"/>
    <property type="match status" value="1"/>
</dbReference>
<dbReference type="SUPFAM" id="SSF52540">
    <property type="entry name" value="P-loop containing nucleoside triphosphate hydrolases"/>
    <property type="match status" value="1"/>
</dbReference>
<feature type="chain" id="PRO_0000215898" description="Nicotinamide riboside kinase">
    <location>
        <begin position="1"/>
        <end position="240"/>
    </location>
</feature>
<feature type="active site" description="Proton acceptor" evidence="2">
    <location>
        <position position="39"/>
    </location>
</feature>
<feature type="binding site" evidence="2">
    <location>
        <begin position="13"/>
        <end position="21"/>
    </location>
    <ligand>
        <name>ATP</name>
        <dbReference type="ChEBI" id="CHEBI:30616"/>
    </ligand>
</feature>
<feature type="binding site" evidence="2">
    <location>
        <position position="20"/>
    </location>
    <ligand>
        <name>Mg(2+)</name>
        <dbReference type="ChEBI" id="CHEBI:18420"/>
    </ligand>
</feature>
<feature type="binding site" evidence="2">
    <location>
        <begin position="39"/>
        <end position="42"/>
    </location>
    <ligand>
        <name>substrate</name>
    </ligand>
</feature>
<feature type="binding site" evidence="2">
    <location>
        <position position="39"/>
    </location>
    <ligand>
        <name>Mg(2+)</name>
        <dbReference type="ChEBI" id="CHEBI:18420"/>
    </ligand>
</feature>
<feature type="binding site" evidence="2">
    <location>
        <begin position="59"/>
        <end position="60"/>
    </location>
    <ligand>
        <name>substrate</name>
    </ligand>
</feature>
<feature type="binding site" evidence="2">
    <location>
        <position position="158"/>
    </location>
    <ligand>
        <name>ATP</name>
        <dbReference type="ChEBI" id="CHEBI:30616"/>
    </ligand>
</feature>
<feature type="binding site" evidence="2">
    <location>
        <position position="159"/>
    </location>
    <ligand>
        <name>substrate</name>
    </ligand>
</feature>
<feature type="binding site" evidence="2">
    <location>
        <begin position="162"/>
        <end position="164"/>
    </location>
    <ligand>
        <name>ATP</name>
        <dbReference type="ChEBI" id="CHEBI:30616"/>
    </ligand>
</feature>
<feature type="binding site" evidence="2">
    <location>
        <begin position="164"/>
        <end position="165"/>
    </location>
    <ligand>
        <name>substrate</name>
    </ligand>
</feature>
<feature type="binding site" evidence="2">
    <location>
        <begin position="208"/>
        <end position="210"/>
    </location>
    <ligand>
        <name>ATP</name>
        <dbReference type="ChEBI" id="CHEBI:30616"/>
    </ligand>
</feature>
<gene>
    <name type="primary">NRK1</name>
    <name type="ordered locus">YNL129W</name>
    <name type="ORF">N1219</name>
    <name type="ORF">N1870</name>
</gene>
<name>NRK1_YEAST</name>
<organism>
    <name type="scientific">Saccharomyces cerevisiae (strain ATCC 204508 / S288c)</name>
    <name type="common">Baker's yeast</name>
    <dbReference type="NCBI Taxonomy" id="559292"/>
    <lineage>
        <taxon>Eukaryota</taxon>
        <taxon>Fungi</taxon>
        <taxon>Dikarya</taxon>
        <taxon>Ascomycota</taxon>
        <taxon>Saccharomycotina</taxon>
        <taxon>Saccharomycetes</taxon>
        <taxon>Saccharomycetales</taxon>
        <taxon>Saccharomycetaceae</taxon>
        <taxon>Saccharomyces</taxon>
    </lineage>
</organism>
<protein>
    <recommendedName>
        <fullName>Nicotinamide riboside kinase</fullName>
        <shortName>NRK</shortName>
        <shortName>NmR-K</shortName>
        <ecNumber evidence="2">2.7.1.22</ecNumber>
    </recommendedName>
    <alternativeName>
        <fullName>Nicotinic acid riboside kinase</fullName>
        <ecNumber evidence="2">2.7.1.173</ecNumber>
    </alternativeName>
    <alternativeName>
        <fullName>Ribosylnicotinamide kinase</fullName>
        <shortName>RNK</shortName>
    </alternativeName>
    <alternativeName>
        <fullName>Ribosylnicotinic acid kinase</fullName>
    </alternativeName>
</protein>
<comment type="function">
    <text evidence="1 4">Catalyzes the phosphorylation of nicotinamide riboside (NR) and nicotinic acid riboside (NaR) to form nicotinamide mononucleotide (NMN) and nicotinic acid mononucleotide (NaMN).</text>
</comment>
<comment type="catalytic activity">
    <reaction evidence="2">
        <text>beta-nicotinamide D-riboside + ATP = beta-nicotinamide D-ribonucleotide + ADP + H(+)</text>
        <dbReference type="Rhea" id="RHEA:14017"/>
        <dbReference type="ChEBI" id="CHEBI:14649"/>
        <dbReference type="ChEBI" id="CHEBI:15378"/>
        <dbReference type="ChEBI" id="CHEBI:15927"/>
        <dbReference type="ChEBI" id="CHEBI:30616"/>
        <dbReference type="ChEBI" id="CHEBI:456216"/>
        <dbReference type="EC" id="2.7.1.22"/>
    </reaction>
</comment>
<comment type="catalytic activity">
    <reaction evidence="2">
        <text>beta-D-ribosylnicotinate + ATP = nicotinate beta-D-ribonucleotide + ADP + H(+)</text>
        <dbReference type="Rhea" id="RHEA:25568"/>
        <dbReference type="ChEBI" id="CHEBI:15378"/>
        <dbReference type="ChEBI" id="CHEBI:30616"/>
        <dbReference type="ChEBI" id="CHEBI:57502"/>
        <dbReference type="ChEBI" id="CHEBI:58527"/>
        <dbReference type="ChEBI" id="CHEBI:456216"/>
        <dbReference type="EC" id="2.7.1.173"/>
    </reaction>
</comment>
<comment type="pathway">
    <text evidence="2">Cofactor biosynthesis; NAD(+) biosynthesis.</text>
</comment>
<comment type="miscellaneous">
    <text evidence="3">Present with 1460 molecules/cell in log phase SD medium.</text>
</comment>
<comment type="similarity">
    <text evidence="5">Belongs to the uridine kinase family. NRK subfamily.</text>
</comment>